<dbReference type="EC" id="6.3.4.16" evidence="1"/>
<dbReference type="EC" id="6.3.5.5" evidence="1"/>
<dbReference type="EMBL" id="CP000425">
    <property type="protein sequence ID" value="ABJ73007.1"/>
    <property type="molecule type" value="Genomic_DNA"/>
</dbReference>
<dbReference type="RefSeq" id="WP_011676367.1">
    <property type="nucleotide sequence ID" value="NC_008527.1"/>
</dbReference>
<dbReference type="SMR" id="Q02YG5"/>
<dbReference type="KEGG" id="llc:LACR_1498"/>
<dbReference type="HOGENOM" id="CLU_000513_1_2_9"/>
<dbReference type="UniPathway" id="UPA00068">
    <property type="reaction ID" value="UER00171"/>
</dbReference>
<dbReference type="UniPathway" id="UPA00070">
    <property type="reaction ID" value="UER00115"/>
</dbReference>
<dbReference type="Proteomes" id="UP000000240">
    <property type="component" value="Chromosome"/>
</dbReference>
<dbReference type="GO" id="GO:0005737">
    <property type="term" value="C:cytoplasm"/>
    <property type="evidence" value="ECO:0007669"/>
    <property type="project" value="TreeGrafter"/>
</dbReference>
<dbReference type="GO" id="GO:0005524">
    <property type="term" value="F:ATP binding"/>
    <property type="evidence" value="ECO:0007669"/>
    <property type="project" value="UniProtKB-UniRule"/>
</dbReference>
<dbReference type="GO" id="GO:0004087">
    <property type="term" value="F:carbamoyl-phosphate synthase (ammonia) activity"/>
    <property type="evidence" value="ECO:0007669"/>
    <property type="project" value="RHEA"/>
</dbReference>
<dbReference type="GO" id="GO:0004088">
    <property type="term" value="F:carbamoyl-phosphate synthase (glutamine-hydrolyzing) activity"/>
    <property type="evidence" value="ECO:0007669"/>
    <property type="project" value="UniProtKB-UniRule"/>
</dbReference>
<dbReference type="GO" id="GO:0046872">
    <property type="term" value="F:metal ion binding"/>
    <property type="evidence" value="ECO:0007669"/>
    <property type="project" value="UniProtKB-KW"/>
</dbReference>
<dbReference type="GO" id="GO:0044205">
    <property type="term" value="P:'de novo' UMP biosynthetic process"/>
    <property type="evidence" value="ECO:0007669"/>
    <property type="project" value="UniProtKB-UniRule"/>
</dbReference>
<dbReference type="GO" id="GO:0006541">
    <property type="term" value="P:glutamine metabolic process"/>
    <property type="evidence" value="ECO:0007669"/>
    <property type="project" value="TreeGrafter"/>
</dbReference>
<dbReference type="GO" id="GO:0006526">
    <property type="term" value="P:L-arginine biosynthetic process"/>
    <property type="evidence" value="ECO:0007669"/>
    <property type="project" value="UniProtKB-UniRule"/>
</dbReference>
<dbReference type="CDD" id="cd01424">
    <property type="entry name" value="MGS_CPS_II"/>
    <property type="match status" value="1"/>
</dbReference>
<dbReference type="FunFam" id="1.10.1030.10:FF:000002">
    <property type="entry name" value="Carbamoyl-phosphate synthase large chain"/>
    <property type="match status" value="1"/>
</dbReference>
<dbReference type="FunFam" id="3.30.1490.20:FF:000001">
    <property type="entry name" value="Carbamoyl-phosphate synthase large chain"/>
    <property type="match status" value="1"/>
</dbReference>
<dbReference type="FunFam" id="3.30.470.20:FF:000001">
    <property type="entry name" value="Carbamoyl-phosphate synthase large chain"/>
    <property type="match status" value="1"/>
</dbReference>
<dbReference type="FunFam" id="3.30.470.20:FF:000026">
    <property type="entry name" value="Carbamoyl-phosphate synthase large chain"/>
    <property type="match status" value="1"/>
</dbReference>
<dbReference type="FunFam" id="3.40.50.20:FF:000001">
    <property type="entry name" value="Carbamoyl-phosphate synthase large chain"/>
    <property type="match status" value="1"/>
</dbReference>
<dbReference type="FunFam" id="3.40.50.20:FF:000002">
    <property type="entry name" value="Carbamoyl-phosphate synthase large chain"/>
    <property type="match status" value="1"/>
</dbReference>
<dbReference type="Gene3D" id="3.40.50.20">
    <property type="match status" value="2"/>
</dbReference>
<dbReference type="Gene3D" id="3.30.1490.20">
    <property type="entry name" value="ATP-grasp fold, A domain"/>
    <property type="match status" value="1"/>
</dbReference>
<dbReference type="Gene3D" id="3.30.470.20">
    <property type="entry name" value="ATP-grasp fold, B domain"/>
    <property type="match status" value="2"/>
</dbReference>
<dbReference type="Gene3D" id="1.10.1030.10">
    <property type="entry name" value="Carbamoyl-phosphate synthetase, large subunit oligomerisation domain"/>
    <property type="match status" value="1"/>
</dbReference>
<dbReference type="Gene3D" id="3.40.50.1380">
    <property type="entry name" value="Methylglyoxal synthase-like domain"/>
    <property type="match status" value="1"/>
</dbReference>
<dbReference type="HAMAP" id="MF_01210_A">
    <property type="entry name" value="CPSase_L_chain_A"/>
    <property type="match status" value="1"/>
</dbReference>
<dbReference type="HAMAP" id="MF_01210_B">
    <property type="entry name" value="CPSase_L_chain_B"/>
    <property type="match status" value="1"/>
</dbReference>
<dbReference type="InterPro" id="IPR011761">
    <property type="entry name" value="ATP-grasp"/>
</dbReference>
<dbReference type="InterPro" id="IPR013815">
    <property type="entry name" value="ATP_grasp_subdomain_1"/>
</dbReference>
<dbReference type="InterPro" id="IPR006275">
    <property type="entry name" value="CarbamoylP_synth_lsu"/>
</dbReference>
<dbReference type="InterPro" id="IPR005480">
    <property type="entry name" value="CarbamoylP_synth_lsu_oligo"/>
</dbReference>
<dbReference type="InterPro" id="IPR036897">
    <property type="entry name" value="CarbamoylP_synth_lsu_oligo_sf"/>
</dbReference>
<dbReference type="InterPro" id="IPR005479">
    <property type="entry name" value="CbamoylP_synth_lsu-like_ATP-bd"/>
</dbReference>
<dbReference type="InterPro" id="IPR005483">
    <property type="entry name" value="CbamoylP_synth_lsu_CPSase_dom"/>
</dbReference>
<dbReference type="InterPro" id="IPR011607">
    <property type="entry name" value="MGS-like_dom"/>
</dbReference>
<dbReference type="InterPro" id="IPR036914">
    <property type="entry name" value="MGS-like_dom_sf"/>
</dbReference>
<dbReference type="InterPro" id="IPR033937">
    <property type="entry name" value="MGS_CPS_CarB"/>
</dbReference>
<dbReference type="InterPro" id="IPR016185">
    <property type="entry name" value="PreATP-grasp_dom_sf"/>
</dbReference>
<dbReference type="NCBIfam" id="TIGR01369">
    <property type="entry name" value="CPSaseII_lrg"/>
    <property type="match status" value="1"/>
</dbReference>
<dbReference type="NCBIfam" id="NF003671">
    <property type="entry name" value="PRK05294.1"/>
    <property type="match status" value="1"/>
</dbReference>
<dbReference type="NCBIfam" id="NF009455">
    <property type="entry name" value="PRK12815.1"/>
    <property type="match status" value="1"/>
</dbReference>
<dbReference type="PANTHER" id="PTHR11405:SF53">
    <property type="entry name" value="CARBAMOYL-PHOSPHATE SYNTHASE [AMMONIA], MITOCHONDRIAL"/>
    <property type="match status" value="1"/>
</dbReference>
<dbReference type="PANTHER" id="PTHR11405">
    <property type="entry name" value="CARBAMOYLTRANSFERASE FAMILY MEMBER"/>
    <property type="match status" value="1"/>
</dbReference>
<dbReference type="Pfam" id="PF02786">
    <property type="entry name" value="CPSase_L_D2"/>
    <property type="match status" value="2"/>
</dbReference>
<dbReference type="Pfam" id="PF02787">
    <property type="entry name" value="CPSase_L_D3"/>
    <property type="match status" value="1"/>
</dbReference>
<dbReference type="Pfam" id="PF02142">
    <property type="entry name" value="MGS"/>
    <property type="match status" value="1"/>
</dbReference>
<dbReference type="PRINTS" id="PR00098">
    <property type="entry name" value="CPSASE"/>
</dbReference>
<dbReference type="SMART" id="SM01096">
    <property type="entry name" value="CPSase_L_D3"/>
    <property type="match status" value="1"/>
</dbReference>
<dbReference type="SMART" id="SM01209">
    <property type="entry name" value="GARS_A"/>
    <property type="match status" value="1"/>
</dbReference>
<dbReference type="SMART" id="SM00851">
    <property type="entry name" value="MGS"/>
    <property type="match status" value="1"/>
</dbReference>
<dbReference type="SUPFAM" id="SSF48108">
    <property type="entry name" value="Carbamoyl phosphate synthetase, large subunit connection domain"/>
    <property type="match status" value="1"/>
</dbReference>
<dbReference type="SUPFAM" id="SSF56059">
    <property type="entry name" value="Glutathione synthetase ATP-binding domain-like"/>
    <property type="match status" value="2"/>
</dbReference>
<dbReference type="SUPFAM" id="SSF52335">
    <property type="entry name" value="Methylglyoxal synthase-like"/>
    <property type="match status" value="1"/>
</dbReference>
<dbReference type="SUPFAM" id="SSF52440">
    <property type="entry name" value="PreATP-grasp domain"/>
    <property type="match status" value="2"/>
</dbReference>
<dbReference type="PROSITE" id="PS50975">
    <property type="entry name" value="ATP_GRASP"/>
    <property type="match status" value="2"/>
</dbReference>
<dbReference type="PROSITE" id="PS00866">
    <property type="entry name" value="CPSASE_1"/>
    <property type="match status" value="2"/>
</dbReference>
<dbReference type="PROSITE" id="PS00867">
    <property type="entry name" value="CPSASE_2"/>
    <property type="match status" value="2"/>
</dbReference>
<dbReference type="PROSITE" id="PS51855">
    <property type="entry name" value="MGS"/>
    <property type="match status" value="1"/>
</dbReference>
<name>CARB_LACLS</name>
<protein>
    <recommendedName>
        <fullName evidence="1">Carbamoyl phosphate synthase large chain</fullName>
        <ecNumber evidence="1">6.3.4.16</ecNumber>
        <ecNumber evidence="1">6.3.5.5</ecNumber>
    </recommendedName>
    <alternativeName>
        <fullName evidence="1">Carbamoyl phosphate synthetase ammonia chain</fullName>
    </alternativeName>
</protein>
<evidence type="ECO:0000255" key="1">
    <source>
        <dbReference type="HAMAP-Rule" id="MF_01210"/>
    </source>
</evidence>
<organism>
    <name type="scientific">Lactococcus lactis subsp. cremoris (strain SK11)</name>
    <dbReference type="NCBI Taxonomy" id="272622"/>
    <lineage>
        <taxon>Bacteria</taxon>
        <taxon>Bacillati</taxon>
        <taxon>Bacillota</taxon>
        <taxon>Bacilli</taxon>
        <taxon>Lactobacillales</taxon>
        <taxon>Streptococcaceae</taxon>
        <taxon>Lactococcus</taxon>
        <taxon>Lactococcus cremoris subsp. cremoris</taxon>
    </lineage>
</organism>
<reference key="1">
    <citation type="journal article" date="2006" name="Proc. Natl. Acad. Sci. U.S.A.">
        <title>Comparative genomics of the lactic acid bacteria.</title>
        <authorList>
            <person name="Makarova K.S."/>
            <person name="Slesarev A."/>
            <person name="Wolf Y.I."/>
            <person name="Sorokin A."/>
            <person name="Mirkin B."/>
            <person name="Koonin E.V."/>
            <person name="Pavlov A."/>
            <person name="Pavlova N."/>
            <person name="Karamychev V."/>
            <person name="Polouchine N."/>
            <person name="Shakhova V."/>
            <person name="Grigoriev I."/>
            <person name="Lou Y."/>
            <person name="Rohksar D."/>
            <person name="Lucas S."/>
            <person name="Huang K."/>
            <person name="Goodstein D.M."/>
            <person name="Hawkins T."/>
            <person name="Plengvidhya V."/>
            <person name="Welker D."/>
            <person name="Hughes J."/>
            <person name="Goh Y."/>
            <person name="Benson A."/>
            <person name="Baldwin K."/>
            <person name="Lee J.-H."/>
            <person name="Diaz-Muniz I."/>
            <person name="Dosti B."/>
            <person name="Smeianov V."/>
            <person name="Wechter W."/>
            <person name="Barabote R."/>
            <person name="Lorca G."/>
            <person name="Altermann E."/>
            <person name="Barrangou R."/>
            <person name="Ganesan B."/>
            <person name="Xie Y."/>
            <person name="Rawsthorne H."/>
            <person name="Tamir D."/>
            <person name="Parker C."/>
            <person name="Breidt F."/>
            <person name="Broadbent J.R."/>
            <person name="Hutkins R."/>
            <person name="O'Sullivan D."/>
            <person name="Steele J."/>
            <person name="Unlu G."/>
            <person name="Saier M.H. Jr."/>
            <person name="Klaenhammer T."/>
            <person name="Richardson P."/>
            <person name="Kozyavkin S."/>
            <person name="Weimer B.C."/>
            <person name="Mills D.A."/>
        </authorList>
    </citation>
    <scope>NUCLEOTIDE SEQUENCE [LARGE SCALE GENOMIC DNA]</scope>
    <source>
        <strain>SK11</strain>
    </source>
</reference>
<comment type="function">
    <text evidence="1">Large subunit of the glutamine-dependent carbamoyl phosphate synthetase (CPSase). CPSase catalyzes the formation of carbamoyl phosphate from the ammonia moiety of glutamine, carbonate, and phosphate donated by ATP, constituting the first step of 2 biosynthetic pathways, one leading to arginine and/or urea and the other to pyrimidine nucleotides. The large subunit (synthetase) binds the substrates ammonia (free or transferred from glutamine from the small subunit), hydrogencarbonate and ATP and carries out an ATP-coupled ligase reaction, activating hydrogencarbonate by forming carboxy phosphate which reacts with ammonia to form carbamoyl phosphate.</text>
</comment>
<comment type="catalytic activity">
    <reaction evidence="1">
        <text>hydrogencarbonate + L-glutamine + 2 ATP + H2O = carbamoyl phosphate + L-glutamate + 2 ADP + phosphate + 2 H(+)</text>
        <dbReference type="Rhea" id="RHEA:18633"/>
        <dbReference type="ChEBI" id="CHEBI:15377"/>
        <dbReference type="ChEBI" id="CHEBI:15378"/>
        <dbReference type="ChEBI" id="CHEBI:17544"/>
        <dbReference type="ChEBI" id="CHEBI:29985"/>
        <dbReference type="ChEBI" id="CHEBI:30616"/>
        <dbReference type="ChEBI" id="CHEBI:43474"/>
        <dbReference type="ChEBI" id="CHEBI:58228"/>
        <dbReference type="ChEBI" id="CHEBI:58359"/>
        <dbReference type="ChEBI" id="CHEBI:456216"/>
        <dbReference type="EC" id="6.3.5.5"/>
    </reaction>
</comment>
<comment type="catalytic activity">
    <molecule>Carbamoyl phosphate synthase large chain</molecule>
    <reaction evidence="1">
        <text>hydrogencarbonate + NH4(+) + 2 ATP = carbamoyl phosphate + 2 ADP + phosphate + 2 H(+)</text>
        <dbReference type="Rhea" id="RHEA:18029"/>
        <dbReference type="ChEBI" id="CHEBI:15378"/>
        <dbReference type="ChEBI" id="CHEBI:17544"/>
        <dbReference type="ChEBI" id="CHEBI:28938"/>
        <dbReference type="ChEBI" id="CHEBI:30616"/>
        <dbReference type="ChEBI" id="CHEBI:43474"/>
        <dbReference type="ChEBI" id="CHEBI:58228"/>
        <dbReference type="ChEBI" id="CHEBI:456216"/>
        <dbReference type="EC" id="6.3.4.16"/>
    </reaction>
</comment>
<comment type="cofactor">
    <cofactor evidence="1">
        <name>Mg(2+)</name>
        <dbReference type="ChEBI" id="CHEBI:18420"/>
    </cofactor>
    <cofactor evidence="1">
        <name>Mn(2+)</name>
        <dbReference type="ChEBI" id="CHEBI:29035"/>
    </cofactor>
    <text evidence="1">Binds 4 Mg(2+) or Mn(2+) ions per subunit.</text>
</comment>
<comment type="pathway">
    <text evidence="1">Amino-acid biosynthesis; L-arginine biosynthesis; carbamoyl phosphate from bicarbonate: step 1/1.</text>
</comment>
<comment type="pathway">
    <text evidence="1">Pyrimidine metabolism; UMP biosynthesis via de novo pathway; (S)-dihydroorotate from bicarbonate: step 1/3.</text>
</comment>
<comment type="subunit">
    <text evidence="1">Composed of two chains; the small (or glutamine) chain promotes the hydrolysis of glutamine to ammonia, which is used by the large (or ammonia) chain to synthesize carbamoyl phosphate. Tetramer of heterodimers (alpha,beta)4.</text>
</comment>
<comment type="domain">
    <text evidence="1">The large subunit is composed of 2 ATP-grasp domains that are involved in binding the 2 ATP molecules needed for carbamoyl phosphate synthesis. The N-terminal ATP-grasp domain (referred to as the carboxyphosphate synthetic component) catalyzes the ATP-dependent phosphorylation of hydrogencarbonate to carboxyphosphate and the subsequent nucleophilic attack by ammonia to form a carbamate intermediate. The C-terminal ATP-grasp domain (referred to as the carbamoyl phosphate synthetic component) then catalyzes the phosphorylation of carbamate with the second ATP to form the end product carbamoyl phosphate. The reactive and unstable enzyme intermediates are sequentially channeled from one active site to the next through the interior of the protein over a distance of at least 96 A.</text>
</comment>
<comment type="similarity">
    <text evidence="1">Belongs to the CarB family.</text>
</comment>
<gene>
    <name evidence="1" type="primary">carB</name>
    <name type="ordered locus">LACR_1498</name>
</gene>
<keyword id="KW-0028">Amino-acid biosynthesis</keyword>
<keyword id="KW-0055">Arginine biosynthesis</keyword>
<keyword id="KW-0067">ATP-binding</keyword>
<keyword id="KW-0436">Ligase</keyword>
<keyword id="KW-0460">Magnesium</keyword>
<keyword id="KW-0464">Manganese</keyword>
<keyword id="KW-0479">Metal-binding</keyword>
<keyword id="KW-0547">Nucleotide-binding</keyword>
<keyword id="KW-0665">Pyrimidine biosynthesis</keyword>
<keyword id="KW-0677">Repeat</keyword>
<sequence length="1064" mass="117365">MPKRNDIKKIMIIGSGPIIIGQAAEFDYAGTQACLALKEEGYEVVLVNSNPATIMTDREIADTVYIEPITLEFVSKILRKERPDALLPTLGGQTGLNMAMELSKTGILEELNVELLGTKLSAIDQAEDRELFKELCESINEPLCASDIATTVEEAINIADKIGYPIIVRPAFTMGGTGGGICDTEEELREIVANGLKLSPVTQCLIEESIAGYKEIEYEVMRDSADNAIVVCNMENFDPVGVHTGDSIVFAPSQTLSDNEYQMLRDASLNIIHALKIEGGCNVQLALDPNSYEYRVIEVNPRVSRSSALASKATGYPIAKMSAKIAIGMTLDEIINPVTNKTYAMFEPALDYVVAKIARFPFDKFENGDRHLGTQMKATGEVMAIGRNIEESLLKAVRSLEIGVFHNEMTEAIEADDEKLYEKMVKTQDDRLFYVSEAIRCGIPIEEIADLTKIDIFFLDKLLHIVEIENQLKVNIFEPELLKTAKKNGFSDREIAKLWNVTPEEVRRRRQENKIIPVYKMVDTCAAEFESSTPYFYSTYEWENESKRSDKEKIIVLGSGPIRIGQGVEFDYATVHCVKAIQALGKEAIVINSNPETVSTDFSISDKLYFEPLTFEDVMNVIDLEEPLGVIVQFGGQTAINLAEPLSKAGVKILGTQVEDLDRAEDRDLFEKALQDLDIPQPPGATATNEEEAVANANKIGYPVLIRPSFVLGGRAMEIINNEKDLRDYMNRAVKASPEHPVLVDSYLQGQECEVDAICDGKEVLLPGIMEHIERAGVHSGDSMAVYPPQNLSQAIIDTIVDYTKRLAIGLNCIGMMNIQFVIYEEQVYVIEVNPRASRTVPFLSKVTNIPMAQLATQMILGENLKDLGYEAGLAPTPDMVHVKAPVFSFTKLAKVDSLLGPEMKSTGEAMGSDVTLEKALYKSFEAAKLHMADYGSVLFTVADEDKEETLAFAKDFAEIGYSLVATAGTAAFLKENGLYVREVEKLAGGEDEEGTLVEDIRQGRVQAVVNTMGNTRASLTTATDGFRIRQEAISRGIPLFTSLDTVAAILKVMQSRSFTTKNI</sequence>
<proteinExistence type="inferred from homology"/>
<accession>Q02YG5</accession>
<feature type="chain" id="PRO_1000066356" description="Carbamoyl phosphate synthase large chain">
    <location>
        <begin position="1"/>
        <end position="1064"/>
    </location>
</feature>
<feature type="domain" description="ATP-grasp 1" evidence="1">
    <location>
        <begin position="133"/>
        <end position="327"/>
    </location>
</feature>
<feature type="domain" description="ATP-grasp 2" evidence="1">
    <location>
        <begin position="671"/>
        <end position="861"/>
    </location>
</feature>
<feature type="domain" description="MGS-like" evidence="1">
    <location>
        <begin position="930"/>
        <end position="1064"/>
    </location>
</feature>
<feature type="region of interest" description="Carboxyphosphate synthetic domain" evidence="1">
    <location>
        <begin position="1"/>
        <end position="401"/>
    </location>
</feature>
<feature type="region of interest" description="Oligomerization domain" evidence="1">
    <location>
        <begin position="402"/>
        <end position="546"/>
    </location>
</feature>
<feature type="region of interest" description="Carbamoyl phosphate synthetic domain" evidence="1">
    <location>
        <begin position="547"/>
        <end position="929"/>
    </location>
</feature>
<feature type="region of interest" description="Allosteric domain" evidence="1">
    <location>
        <begin position="930"/>
        <end position="1064"/>
    </location>
</feature>
<feature type="binding site" evidence="1">
    <location>
        <position position="129"/>
    </location>
    <ligand>
        <name>ATP</name>
        <dbReference type="ChEBI" id="CHEBI:30616"/>
        <label>1</label>
    </ligand>
</feature>
<feature type="binding site" evidence="1">
    <location>
        <position position="169"/>
    </location>
    <ligand>
        <name>ATP</name>
        <dbReference type="ChEBI" id="CHEBI:30616"/>
        <label>1</label>
    </ligand>
</feature>
<feature type="binding site" evidence="1">
    <location>
        <position position="175"/>
    </location>
    <ligand>
        <name>ATP</name>
        <dbReference type="ChEBI" id="CHEBI:30616"/>
        <label>1</label>
    </ligand>
</feature>
<feature type="binding site" evidence="1">
    <location>
        <position position="176"/>
    </location>
    <ligand>
        <name>ATP</name>
        <dbReference type="ChEBI" id="CHEBI:30616"/>
        <label>1</label>
    </ligand>
</feature>
<feature type="binding site" evidence="1">
    <location>
        <position position="208"/>
    </location>
    <ligand>
        <name>ATP</name>
        <dbReference type="ChEBI" id="CHEBI:30616"/>
        <label>1</label>
    </ligand>
</feature>
<feature type="binding site" evidence="1">
    <location>
        <position position="210"/>
    </location>
    <ligand>
        <name>ATP</name>
        <dbReference type="ChEBI" id="CHEBI:30616"/>
        <label>1</label>
    </ligand>
</feature>
<feature type="binding site" evidence="1">
    <location>
        <position position="215"/>
    </location>
    <ligand>
        <name>ATP</name>
        <dbReference type="ChEBI" id="CHEBI:30616"/>
        <label>1</label>
    </ligand>
</feature>
<feature type="binding site" evidence="1">
    <location>
        <position position="241"/>
    </location>
    <ligand>
        <name>ATP</name>
        <dbReference type="ChEBI" id="CHEBI:30616"/>
        <label>1</label>
    </ligand>
</feature>
<feature type="binding site" evidence="1">
    <location>
        <position position="242"/>
    </location>
    <ligand>
        <name>ATP</name>
        <dbReference type="ChEBI" id="CHEBI:30616"/>
        <label>1</label>
    </ligand>
</feature>
<feature type="binding site" evidence="1">
    <location>
        <position position="243"/>
    </location>
    <ligand>
        <name>ATP</name>
        <dbReference type="ChEBI" id="CHEBI:30616"/>
        <label>1</label>
    </ligand>
</feature>
<feature type="binding site" evidence="1">
    <location>
        <position position="284"/>
    </location>
    <ligand>
        <name>ATP</name>
        <dbReference type="ChEBI" id="CHEBI:30616"/>
        <label>1</label>
    </ligand>
</feature>
<feature type="binding site" evidence="1">
    <location>
        <position position="284"/>
    </location>
    <ligand>
        <name>Mg(2+)</name>
        <dbReference type="ChEBI" id="CHEBI:18420"/>
        <label>1</label>
    </ligand>
</feature>
<feature type="binding site" evidence="1">
    <location>
        <position position="284"/>
    </location>
    <ligand>
        <name>Mn(2+)</name>
        <dbReference type="ChEBI" id="CHEBI:29035"/>
        <label>1</label>
    </ligand>
</feature>
<feature type="binding site" evidence="1">
    <location>
        <position position="298"/>
    </location>
    <ligand>
        <name>ATP</name>
        <dbReference type="ChEBI" id="CHEBI:30616"/>
        <label>1</label>
    </ligand>
</feature>
<feature type="binding site" evidence="1">
    <location>
        <position position="298"/>
    </location>
    <ligand>
        <name>Mg(2+)</name>
        <dbReference type="ChEBI" id="CHEBI:18420"/>
        <label>1</label>
    </ligand>
</feature>
<feature type="binding site" evidence="1">
    <location>
        <position position="298"/>
    </location>
    <ligand>
        <name>Mg(2+)</name>
        <dbReference type="ChEBI" id="CHEBI:18420"/>
        <label>2</label>
    </ligand>
</feature>
<feature type="binding site" evidence="1">
    <location>
        <position position="298"/>
    </location>
    <ligand>
        <name>Mn(2+)</name>
        <dbReference type="ChEBI" id="CHEBI:29035"/>
        <label>1</label>
    </ligand>
</feature>
<feature type="binding site" evidence="1">
    <location>
        <position position="298"/>
    </location>
    <ligand>
        <name>Mn(2+)</name>
        <dbReference type="ChEBI" id="CHEBI:29035"/>
        <label>2</label>
    </ligand>
</feature>
<feature type="binding site" evidence="1">
    <location>
        <position position="300"/>
    </location>
    <ligand>
        <name>Mg(2+)</name>
        <dbReference type="ChEBI" id="CHEBI:18420"/>
        <label>2</label>
    </ligand>
</feature>
<feature type="binding site" evidence="1">
    <location>
        <position position="300"/>
    </location>
    <ligand>
        <name>Mn(2+)</name>
        <dbReference type="ChEBI" id="CHEBI:29035"/>
        <label>2</label>
    </ligand>
</feature>
<feature type="binding site" evidence="1">
    <location>
        <position position="707"/>
    </location>
    <ligand>
        <name>ATP</name>
        <dbReference type="ChEBI" id="CHEBI:30616"/>
        <label>2</label>
    </ligand>
</feature>
<feature type="binding site" evidence="1">
    <location>
        <position position="746"/>
    </location>
    <ligand>
        <name>ATP</name>
        <dbReference type="ChEBI" id="CHEBI:30616"/>
        <label>2</label>
    </ligand>
</feature>
<feature type="binding site" evidence="1">
    <location>
        <position position="748"/>
    </location>
    <ligand>
        <name>ATP</name>
        <dbReference type="ChEBI" id="CHEBI:30616"/>
        <label>2</label>
    </ligand>
</feature>
<feature type="binding site" evidence="1">
    <location>
        <position position="752"/>
    </location>
    <ligand>
        <name>ATP</name>
        <dbReference type="ChEBI" id="CHEBI:30616"/>
        <label>2</label>
    </ligand>
</feature>
<feature type="binding site" evidence="1">
    <location>
        <position position="777"/>
    </location>
    <ligand>
        <name>ATP</name>
        <dbReference type="ChEBI" id="CHEBI:30616"/>
        <label>2</label>
    </ligand>
</feature>
<feature type="binding site" evidence="1">
    <location>
        <position position="778"/>
    </location>
    <ligand>
        <name>ATP</name>
        <dbReference type="ChEBI" id="CHEBI:30616"/>
        <label>2</label>
    </ligand>
</feature>
<feature type="binding site" evidence="1">
    <location>
        <position position="779"/>
    </location>
    <ligand>
        <name>ATP</name>
        <dbReference type="ChEBI" id="CHEBI:30616"/>
        <label>2</label>
    </ligand>
</feature>
<feature type="binding site" evidence="1">
    <location>
        <position position="780"/>
    </location>
    <ligand>
        <name>ATP</name>
        <dbReference type="ChEBI" id="CHEBI:30616"/>
        <label>2</label>
    </ligand>
</feature>
<feature type="binding site" evidence="1">
    <location>
        <position position="820"/>
    </location>
    <ligand>
        <name>ATP</name>
        <dbReference type="ChEBI" id="CHEBI:30616"/>
        <label>2</label>
    </ligand>
</feature>
<feature type="binding site" evidence="1">
    <location>
        <position position="820"/>
    </location>
    <ligand>
        <name>Mg(2+)</name>
        <dbReference type="ChEBI" id="CHEBI:18420"/>
        <label>3</label>
    </ligand>
</feature>
<feature type="binding site" evidence="1">
    <location>
        <position position="820"/>
    </location>
    <ligand>
        <name>Mn(2+)</name>
        <dbReference type="ChEBI" id="CHEBI:29035"/>
        <label>3</label>
    </ligand>
</feature>
<feature type="binding site" evidence="1">
    <location>
        <position position="832"/>
    </location>
    <ligand>
        <name>ATP</name>
        <dbReference type="ChEBI" id="CHEBI:30616"/>
        <label>2</label>
    </ligand>
</feature>
<feature type="binding site" evidence="1">
    <location>
        <position position="832"/>
    </location>
    <ligand>
        <name>Mg(2+)</name>
        <dbReference type="ChEBI" id="CHEBI:18420"/>
        <label>3</label>
    </ligand>
</feature>
<feature type="binding site" evidence="1">
    <location>
        <position position="832"/>
    </location>
    <ligand>
        <name>Mg(2+)</name>
        <dbReference type="ChEBI" id="CHEBI:18420"/>
        <label>4</label>
    </ligand>
</feature>
<feature type="binding site" evidence="1">
    <location>
        <position position="832"/>
    </location>
    <ligand>
        <name>Mn(2+)</name>
        <dbReference type="ChEBI" id="CHEBI:29035"/>
        <label>3</label>
    </ligand>
</feature>
<feature type="binding site" evidence="1">
    <location>
        <position position="832"/>
    </location>
    <ligand>
        <name>Mn(2+)</name>
        <dbReference type="ChEBI" id="CHEBI:29035"/>
        <label>4</label>
    </ligand>
</feature>
<feature type="binding site" evidence="1">
    <location>
        <position position="834"/>
    </location>
    <ligand>
        <name>Mg(2+)</name>
        <dbReference type="ChEBI" id="CHEBI:18420"/>
        <label>4</label>
    </ligand>
</feature>
<feature type="binding site" evidence="1">
    <location>
        <position position="834"/>
    </location>
    <ligand>
        <name>Mn(2+)</name>
        <dbReference type="ChEBI" id="CHEBI:29035"/>
        <label>4</label>
    </ligand>
</feature>